<proteinExistence type="evidence at protein level"/>
<dbReference type="EC" id="3.1.3.16"/>
<dbReference type="EMBL" id="AC068562">
    <property type="protein sequence ID" value="AAF87263.1"/>
    <property type="molecule type" value="Genomic_DNA"/>
</dbReference>
<dbReference type="EMBL" id="CP002684">
    <property type="protein sequence ID" value="AEE30220.1"/>
    <property type="molecule type" value="Genomic_DNA"/>
</dbReference>
<dbReference type="EMBL" id="CP002684">
    <property type="protein sequence ID" value="AEE30221.1"/>
    <property type="molecule type" value="Genomic_DNA"/>
</dbReference>
<dbReference type="EMBL" id="AY080735">
    <property type="protein sequence ID" value="AAL86005.1"/>
    <property type="molecule type" value="mRNA"/>
</dbReference>
<dbReference type="EMBL" id="AY133737">
    <property type="protein sequence ID" value="AAM91671.1"/>
    <property type="molecule type" value="mRNA"/>
</dbReference>
<dbReference type="EMBL" id="BX813947">
    <property type="status" value="NOT_ANNOTATED_CDS"/>
    <property type="molecule type" value="mRNA"/>
</dbReference>
<dbReference type="EMBL" id="AY084874">
    <property type="protein sequence ID" value="AAM61437.1"/>
    <property type="molecule type" value="mRNA"/>
</dbReference>
<dbReference type="PIR" id="F86355">
    <property type="entry name" value="F86355"/>
</dbReference>
<dbReference type="RefSeq" id="NP_564165.1">
    <molecule id="Q9LME4-1"/>
    <property type="nucleotide sequence ID" value="NM_102079.5"/>
</dbReference>
<dbReference type="RefSeq" id="NP_973883.1">
    <molecule id="Q9LME4-2"/>
    <property type="nucleotide sequence ID" value="NM_202154.2"/>
</dbReference>
<dbReference type="SMR" id="Q9LME4"/>
<dbReference type="BioGRID" id="24074">
    <property type="interactions" value="4"/>
</dbReference>
<dbReference type="FunCoup" id="Q9LME4">
    <property type="interactions" value="352"/>
</dbReference>
<dbReference type="IntAct" id="Q9LME4">
    <property type="interactions" value="2"/>
</dbReference>
<dbReference type="STRING" id="3702.Q9LME4"/>
<dbReference type="iPTMnet" id="Q9LME4"/>
<dbReference type="SwissPalm" id="Q9LME4"/>
<dbReference type="PaxDb" id="3702-AT1G22280.3"/>
<dbReference type="ProteomicsDB" id="248868">
    <molecule id="Q9LME4-1"/>
</dbReference>
<dbReference type="EnsemblPlants" id="AT1G22280.1">
    <molecule id="Q9LME4-1"/>
    <property type="protein sequence ID" value="AT1G22280.1"/>
    <property type="gene ID" value="AT1G22280"/>
</dbReference>
<dbReference type="EnsemblPlants" id="AT1G22280.2">
    <molecule id="Q9LME4-2"/>
    <property type="protein sequence ID" value="AT1G22280.2"/>
    <property type="gene ID" value="AT1G22280"/>
</dbReference>
<dbReference type="GeneID" id="838835"/>
<dbReference type="Gramene" id="AT1G22280.1">
    <molecule id="Q9LME4-1"/>
    <property type="protein sequence ID" value="AT1G22280.1"/>
    <property type="gene ID" value="AT1G22280"/>
</dbReference>
<dbReference type="Gramene" id="AT1G22280.2">
    <molecule id="Q9LME4-2"/>
    <property type="protein sequence ID" value="AT1G22280.2"/>
    <property type="gene ID" value="AT1G22280"/>
</dbReference>
<dbReference type="KEGG" id="ath:AT1G22280"/>
<dbReference type="Araport" id="AT1G22280"/>
<dbReference type="TAIR" id="AT1G22280">
    <property type="gene designation" value="PAPP2C"/>
</dbReference>
<dbReference type="eggNOG" id="KOG0698">
    <property type="taxonomic scope" value="Eukaryota"/>
</dbReference>
<dbReference type="HOGENOM" id="CLU_013173_0_1_1"/>
<dbReference type="InParanoid" id="Q9LME4"/>
<dbReference type="OrthoDB" id="10264738at2759"/>
<dbReference type="PhylomeDB" id="Q9LME4"/>
<dbReference type="PRO" id="PR:Q9LME4"/>
<dbReference type="Proteomes" id="UP000006548">
    <property type="component" value="Chromosome 1"/>
</dbReference>
<dbReference type="ExpressionAtlas" id="Q9LME4">
    <property type="expression patterns" value="baseline and differential"/>
</dbReference>
<dbReference type="GO" id="GO:0005634">
    <property type="term" value="C:nucleus"/>
    <property type="evidence" value="ECO:0007669"/>
    <property type="project" value="UniProtKB-SubCell"/>
</dbReference>
<dbReference type="GO" id="GO:0046872">
    <property type="term" value="F:metal ion binding"/>
    <property type="evidence" value="ECO:0007669"/>
    <property type="project" value="UniProtKB-KW"/>
</dbReference>
<dbReference type="GO" id="GO:0004722">
    <property type="term" value="F:protein serine/threonine phosphatase activity"/>
    <property type="evidence" value="ECO:0007669"/>
    <property type="project" value="UniProtKB-EC"/>
</dbReference>
<dbReference type="CDD" id="cd00143">
    <property type="entry name" value="PP2Cc"/>
    <property type="match status" value="1"/>
</dbReference>
<dbReference type="FunFam" id="3.60.40.10:FF:000010">
    <property type="entry name" value="Probable protein phosphatase 2C 39"/>
    <property type="match status" value="1"/>
</dbReference>
<dbReference type="Gene3D" id="3.60.40.10">
    <property type="entry name" value="PPM-type phosphatase domain"/>
    <property type="match status" value="1"/>
</dbReference>
<dbReference type="InterPro" id="IPR015655">
    <property type="entry name" value="PP2C"/>
</dbReference>
<dbReference type="InterPro" id="IPR036457">
    <property type="entry name" value="PPM-type-like_dom_sf"/>
</dbReference>
<dbReference type="InterPro" id="IPR001932">
    <property type="entry name" value="PPM-type_phosphatase-like_dom"/>
</dbReference>
<dbReference type="PANTHER" id="PTHR47992">
    <property type="entry name" value="PROTEIN PHOSPHATASE"/>
    <property type="match status" value="1"/>
</dbReference>
<dbReference type="Pfam" id="PF00481">
    <property type="entry name" value="PP2C"/>
    <property type="match status" value="1"/>
</dbReference>
<dbReference type="SMART" id="SM00331">
    <property type="entry name" value="PP2C_SIG"/>
    <property type="match status" value="1"/>
</dbReference>
<dbReference type="SMART" id="SM00332">
    <property type="entry name" value="PP2Cc"/>
    <property type="match status" value="1"/>
</dbReference>
<dbReference type="SUPFAM" id="SSF81606">
    <property type="entry name" value="PP2C-like"/>
    <property type="match status" value="1"/>
</dbReference>
<dbReference type="PROSITE" id="PS51746">
    <property type="entry name" value="PPM_2"/>
    <property type="match status" value="1"/>
</dbReference>
<gene>
    <name type="ordered locus">At1g22280</name>
    <name type="ORF">T16E15.10</name>
</gene>
<accession>Q9LME4</accession>
<accession>Q3ED74</accession>
<accession>Q8LFF8</accession>
<name>P2C09_ARATH</name>
<reference key="1">
    <citation type="journal article" date="2000" name="Nature">
        <title>Sequence and analysis of chromosome 1 of the plant Arabidopsis thaliana.</title>
        <authorList>
            <person name="Theologis A."/>
            <person name="Ecker J.R."/>
            <person name="Palm C.J."/>
            <person name="Federspiel N.A."/>
            <person name="Kaul S."/>
            <person name="White O."/>
            <person name="Alonso J."/>
            <person name="Altafi H."/>
            <person name="Araujo R."/>
            <person name="Bowman C.L."/>
            <person name="Brooks S.Y."/>
            <person name="Buehler E."/>
            <person name="Chan A."/>
            <person name="Chao Q."/>
            <person name="Chen H."/>
            <person name="Cheuk R.F."/>
            <person name="Chin C.W."/>
            <person name="Chung M.K."/>
            <person name="Conn L."/>
            <person name="Conway A.B."/>
            <person name="Conway A.R."/>
            <person name="Creasy T.H."/>
            <person name="Dewar K."/>
            <person name="Dunn P."/>
            <person name="Etgu P."/>
            <person name="Feldblyum T.V."/>
            <person name="Feng J.-D."/>
            <person name="Fong B."/>
            <person name="Fujii C.Y."/>
            <person name="Gill J.E."/>
            <person name="Goldsmith A.D."/>
            <person name="Haas B."/>
            <person name="Hansen N.F."/>
            <person name="Hughes B."/>
            <person name="Huizar L."/>
            <person name="Hunter J.L."/>
            <person name="Jenkins J."/>
            <person name="Johnson-Hopson C."/>
            <person name="Khan S."/>
            <person name="Khaykin E."/>
            <person name="Kim C.J."/>
            <person name="Koo H.L."/>
            <person name="Kremenetskaia I."/>
            <person name="Kurtz D.B."/>
            <person name="Kwan A."/>
            <person name="Lam B."/>
            <person name="Langin-Hooper S."/>
            <person name="Lee A."/>
            <person name="Lee J.M."/>
            <person name="Lenz C.A."/>
            <person name="Li J.H."/>
            <person name="Li Y.-P."/>
            <person name="Lin X."/>
            <person name="Liu S.X."/>
            <person name="Liu Z.A."/>
            <person name="Luros J.S."/>
            <person name="Maiti R."/>
            <person name="Marziali A."/>
            <person name="Militscher J."/>
            <person name="Miranda M."/>
            <person name="Nguyen M."/>
            <person name="Nierman W.C."/>
            <person name="Osborne B.I."/>
            <person name="Pai G."/>
            <person name="Peterson J."/>
            <person name="Pham P.K."/>
            <person name="Rizzo M."/>
            <person name="Rooney T."/>
            <person name="Rowley D."/>
            <person name="Sakano H."/>
            <person name="Salzberg S.L."/>
            <person name="Schwartz J.R."/>
            <person name="Shinn P."/>
            <person name="Southwick A.M."/>
            <person name="Sun H."/>
            <person name="Tallon L.J."/>
            <person name="Tambunga G."/>
            <person name="Toriumi M.J."/>
            <person name="Town C.D."/>
            <person name="Utterback T."/>
            <person name="Van Aken S."/>
            <person name="Vaysberg M."/>
            <person name="Vysotskaia V.S."/>
            <person name="Walker M."/>
            <person name="Wu D."/>
            <person name="Yu G."/>
            <person name="Fraser C.M."/>
            <person name="Venter J.C."/>
            <person name="Davis R.W."/>
        </authorList>
    </citation>
    <scope>NUCLEOTIDE SEQUENCE [LARGE SCALE GENOMIC DNA]</scope>
    <source>
        <strain>cv. Columbia</strain>
    </source>
</reference>
<reference key="2">
    <citation type="journal article" date="2017" name="Plant J.">
        <title>Araport11: a complete reannotation of the Arabidopsis thaliana reference genome.</title>
        <authorList>
            <person name="Cheng C.Y."/>
            <person name="Krishnakumar V."/>
            <person name="Chan A.P."/>
            <person name="Thibaud-Nissen F."/>
            <person name="Schobel S."/>
            <person name="Town C.D."/>
        </authorList>
    </citation>
    <scope>GENOME REANNOTATION</scope>
    <source>
        <strain>cv. Columbia</strain>
    </source>
</reference>
<reference key="3">
    <citation type="journal article" date="2003" name="Science">
        <title>Empirical analysis of transcriptional activity in the Arabidopsis genome.</title>
        <authorList>
            <person name="Yamada K."/>
            <person name="Lim J."/>
            <person name="Dale J.M."/>
            <person name="Chen H."/>
            <person name="Shinn P."/>
            <person name="Palm C.J."/>
            <person name="Southwick A.M."/>
            <person name="Wu H.C."/>
            <person name="Kim C.J."/>
            <person name="Nguyen M."/>
            <person name="Pham P.K."/>
            <person name="Cheuk R.F."/>
            <person name="Karlin-Newmann G."/>
            <person name="Liu S.X."/>
            <person name="Lam B."/>
            <person name="Sakano H."/>
            <person name="Wu T."/>
            <person name="Yu G."/>
            <person name="Miranda M."/>
            <person name="Quach H.L."/>
            <person name="Tripp M."/>
            <person name="Chang C.H."/>
            <person name="Lee J.M."/>
            <person name="Toriumi M.J."/>
            <person name="Chan M.M."/>
            <person name="Tang C.C."/>
            <person name="Onodera C.S."/>
            <person name="Deng J.M."/>
            <person name="Akiyama K."/>
            <person name="Ansari Y."/>
            <person name="Arakawa T."/>
            <person name="Banh J."/>
            <person name="Banno F."/>
            <person name="Bowser L."/>
            <person name="Brooks S.Y."/>
            <person name="Carninci P."/>
            <person name="Chao Q."/>
            <person name="Choy N."/>
            <person name="Enju A."/>
            <person name="Goldsmith A.D."/>
            <person name="Gurjal M."/>
            <person name="Hansen N.F."/>
            <person name="Hayashizaki Y."/>
            <person name="Johnson-Hopson C."/>
            <person name="Hsuan V.W."/>
            <person name="Iida K."/>
            <person name="Karnes M."/>
            <person name="Khan S."/>
            <person name="Koesema E."/>
            <person name="Ishida J."/>
            <person name="Jiang P.X."/>
            <person name="Jones T."/>
            <person name="Kawai J."/>
            <person name="Kamiya A."/>
            <person name="Meyers C."/>
            <person name="Nakajima M."/>
            <person name="Narusaka M."/>
            <person name="Seki M."/>
            <person name="Sakurai T."/>
            <person name="Satou M."/>
            <person name="Tamse R."/>
            <person name="Vaysberg M."/>
            <person name="Wallender E.K."/>
            <person name="Wong C."/>
            <person name="Yamamura Y."/>
            <person name="Yuan S."/>
            <person name="Shinozaki K."/>
            <person name="Davis R.W."/>
            <person name="Theologis A."/>
            <person name="Ecker J.R."/>
        </authorList>
    </citation>
    <scope>NUCLEOTIDE SEQUENCE [LARGE SCALE MRNA] (ISOFORM 1)</scope>
    <source>
        <strain>cv. Columbia</strain>
    </source>
</reference>
<reference key="4">
    <citation type="journal article" date="2004" name="Genome Res.">
        <title>Whole genome sequence comparisons and 'full-length' cDNA sequences: a combined approach to evaluate and improve Arabidopsis genome annotation.</title>
        <authorList>
            <person name="Castelli V."/>
            <person name="Aury J.-M."/>
            <person name="Jaillon O."/>
            <person name="Wincker P."/>
            <person name="Clepet C."/>
            <person name="Menard M."/>
            <person name="Cruaud C."/>
            <person name="Quetier F."/>
            <person name="Scarpelli C."/>
            <person name="Schaechter V."/>
            <person name="Temple G."/>
            <person name="Caboche M."/>
            <person name="Weissenbach J."/>
            <person name="Salanoubat M."/>
        </authorList>
    </citation>
    <scope>NUCLEOTIDE SEQUENCE [LARGE SCALE MRNA] (ISOFORM 2)</scope>
    <source>
        <strain>cv. Columbia</strain>
    </source>
</reference>
<reference key="5">
    <citation type="submission" date="2002-03" db="EMBL/GenBank/DDBJ databases">
        <title>Full-length cDNA from Arabidopsis thaliana.</title>
        <authorList>
            <person name="Brover V.V."/>
            <person name="Troukhan M.E."/>
            <person name="Alexandrov N.A."/>
            <person name="Lu Y.-P."/>
            <person name="Flavell R.B."/>
            <person name="Feldmann K.A."/>
        </authorList>
    </citation>
    <scope>NUCLEOTIDE SEQUENCE [LARGE SCALE MRNA] (ISOFORM 1)</scope>
</reference>
<reference key="6">
    <citation type="journal article" date="2006" name="Proteomics">
        <title>Identification of phytochrome-interacting protein candidates in Arabidopsis thaliana by co-immunoprecipitation coupled with MALDI-TOF MS.</title>
        <authorList>
            <person name="Phee B.-K."/>
            <person name="Shin D.H."/>
            <person name="Cho J.-H."/>
            <person name="Kim S.-H."/>
            <person name="Kim J.-I."/>
            <person name="Lee Y.-H."/>
            <person name="Jeon J.-S."/>
            <person name="Bhoo S.H."/>
            <person name="Hahn T.-R."/>
        </authorList>
    </citation>
    <scope>DISRUPTION PHENOTYPE</scope>
    <scope>INTERACTION WITH PHYTOCHROMES</scope>
    <scope>IDENTIFICATION BY MASS SPECTROMETRY</scope>
</reference>
<reference key="7">
    <citation type="journal article" date="2007" name="Mol. Cell. Proteomics">
        <title>Temporal analysis of sucrose-induced phosphorylation changes in plasma membrane proteins of Arabidopsis.</title>
        <authorList>
            <person name="Niittylae T."/>
            <person name="Fuglsang A.T."/>
            <person name="Palmgren M.G."/>
            <person name="Frommer W.B."/>
            <person name="Schulze W.X."/>
        </authorList>
    </citation>
    <scope>IDENTIFICATION BY MASS SPECTROMETRY [LARGE SCALE ANALYSIS]</scope>
    <source>
        <tissue>Seedling</tissue>
    </source>
</reference>
<reference key="8">
    <citation type="journal article" date="2008" name="Biochem. J.">
        <title>A novel protein phosphatase indirectly regulates phytochrome-interacting factor 3 via phytochrome.</title>
        <authorList>
            <person name="Phee B.-K."/>
            <person name="Kim J.-I."/>
            <person name="Shin D.H."/>
            <person name="Yoo J."/>
            <person name="Park K.-J."/>
            <person name="Han Y.-J."/>
            <person name="Kwon Y.-K."/>
            <person name="Cho M.H."/>
            <person name="Jeon J.-S."/>
            <person name="Bhoo S.H."/>
            <person name="Hahn T.-R."/>
        </authorList>
    </citation>
    <scope>FUNCTION</scope>
    <scope>SUBCELLULAR LOCATION</scope>
</reference>
<reference key="9">
    <citation type="journal article" date="2008" name="BMC Genomics">
        <title>Genome-wide and expression analysis of protein phosphatase 2C in rice and Arabidopsis.</title>
        <authorList>
            <person name="Xue T."/>
            <person name="Wang D."/>
            <person name="Zhang S."/>
            <person name="Ehlting J."/>
            <person name="Ni F."/>
            <person name="Jacab S."/>
            <person name="Zheng C."/>
            <person name="Zhong Y."/>
        </authorList>
    </citation>
    <scope>GENE FAMILY</scope>
    <scope>NOMENCLATURE</scope>
</reference>
<reference key="10">
    <citation type="journal article" date="2008" name="J. Proteome Res.">
        <title>Site-specific phosphorylation profiling of Arabidopsis proteins by mass spectrometry and peptide chip analysis.</title>
        <authorList>
            <person name="de la Fuente van Bentem S."/>
            <person name="Anrather D."/>
            <person name="Dohnal I."/>
            <person name="Roitinger E."/>
            <person name="Csaszar E."/>
            <person name="Joore J."/>
            <person name="Buijnink J."/>
            <person name="Carreri A."/>
            <person name="Forzani C."/>
            <person name="Lorkovic Z.J."/>
            <person name="Barta A."/>
            <person name="Lecourieux D."/>
            <person name="Verhounig A."/>
            <person name="Jonak C."/>
            <person name="Hirt H."/>
        </authorList>
    </citation>
    <scope>IDENTIFICATION BY MASS SPECTROMETRY [LARGE SCALE ANALYSIS]</scope>
    <source>
        <tissue>Root</tissue>
    </source>
</reference>
<reference key="11">
    <citation type="journal article" date="2009" name="J. Proteomics">
        <title>Phosphoproteomic analysis of nuclei-enriched fractions from Arabidopsis thaliana.</title>
        <authorList>
            <person name="Jones A.M.E."/>
            <person name="MacLean D."/>
            <person name="Studholme D.J."/>
            <person name="Serna-Sanz A."/>
            <person name="Andreasson E."/>
            <person name="Rathjen J.P."/>
            <person name="Peck S.C."/>
        </authorList>
    </citation>
    <scope>SUBCELLULAR LOCATION</scope>
    <scope>IDENTIFICATION BY MASS SPECTROMETRY [LARGE SCALE ANALYSIS]</scope>
    <source>
        <strain>cv. Columbia</strain>
    </source>
</reference>
<reference key="12">
    <citation type="journal article" date="2009" name="Plant Physiol.">
        <title>Large-scale Arabidopsis phosphoproteome profiling reveals novel chloroplast kinase substrates and phosphorylation networks.</title>
        <authorList>
            <person name="Reiland S."/>
            <person name="Messerli G."/>
            <person name="Baerenfaller K."/>
            <person name="Gerrits B."/>
            <person name="Endler A."/>
            <person name="Grossmann J."/>
            <person name="Gruissem W."/>
            <person name="Baginsky S."/>
        </authorList>
    </citation>
    <scope>IDENTIFICATION BY MASS SPECTROMETRY [LARGE SCALE ANALYSIS]</scope>
</reference>
<evidence type="ECO:0000250" key="1"/>
<evidence type="ECO:0000255" key="2">
    <source>
        <dbReference type="PROSITE-ProRule" id="PRU01082"/>
    </source>
</evidence>
<evidence type="ECO:0000269" key="3">
    <source>
    </source>
</evidence>
<evidence type="ECO:0000269" key="4">
    <source>
    </source>
</evidence>
<evidence type="ECO:0000269" key="5">
    <source>
    </source>
</evidence>
<evidence type="ECO:0000303" key="6">
    <source>
    </source>
</evidence>
<evidence type="ECO:0000305" key="7"/>
<keyword id="KW-0025">Alternative splicing</keyword>
<keyword id="KW-0378">Hydrolase</keyword>
<keyword id="KW-0460">Magnesium</keyword>
<keyword id="KW-0464">Manganese</keyword>
<keyword id="KW-0479">Metal-binding</keyword>
<keyword id="KW-0539">Nucleus</keyword>
<keyword id="KW-0904">Protein phosphatase</keyword>
<keyword id="KW-1185">Reference proteome</keyword>
<feature type="chain" id="PRO_0000367940" description="Probable protein phosphatase 2C 9">
    <location>
        <begin position="1"/>
        <end position="281"/>
    </location>
</feature>
<feature type="domain" description="PPM-type phosphatase" evidence="2">
    <location>
        <begin position="33"/>
        <end position="280"/>
    </location>
</feature>
<feature type="binding site" evidence="1">
    <location>
        <position position="70"/>
    </location>
    <ligand>
        <name>Mn(2+)</name>
        <dbReference type="ChEBI" id="CHEBI:29035"/>
        <label>1</label>
    </ligand>
</feature>
<feature type="binding site" evidence="1">
    <location>
        <position position="70"/>
    </location>
    <ligand>
        <name>Mn(2+)</name>
        <dbReference type="ChEBI" id="CHEBI:29035"/>
        <label>2</label>
    </ligand>
</feature>
<feature type="binding site" evidence="1">
    <location>
        <position position="71"/>
    </location>
    <ligand>
        <name>Mn(2+)</name>
        <dbReference type="ChEBI" id="CHEBI:29035"/>
        <label>1</label>
    </ligand>
</feature>
<feature type="binding site" evidence="1">
    <location>
        <position position="232"/>
    </location>
    <ligand>
        <name>Mn(2+)</name>
        <dbReference type="ChEBI" id="CHEBI:29035"/>
        <label>2</label>
    </ligand>
</feature>
<feature type="binding site" evidence="1">
    <location>
        <position position="271"/>
    </location>
    <ligand>
        <name>Mn(2+)</name>
        <dbReference type="ChEBI" id="CHEBI:29035"/>
        <label>2</label>
    </ligand>
</feature>
<feature type="splice variant" id="VSP_036759" description="In isoform 2." evidence="6">
    <original>DVPRVNGQLAVSRA</original>
    <variation>KELILSIECLMKIE</variation>
    <location>
        <begin position="186"/>
        <end position="199"/>
    </location>
</feature>
<feature type="splice variant" id="VSP_036760" description="In isoform 2." evidence="6">
    <location>
        <begin position="200"/>
        <end position="281"/>
    </location>
</feature>
<feature type="sequence conflict" description="In Ref. 5; AAM61437." evidence="7" ref="5">
    <original>DQ</original>
    <variation>E</variation>
    <location>
        <begin position="111"/>
        <end position="112"/>
    </location>
</feature>
<comment type="function">
    <text evidence="4">Involved in the regulation of phytochrome signaling. May regulate phytochrome-interacting factor 3 (PIF3) through the dephosphorylation of phytochrome.</text>
</comment>
<comment type="catalytic activity">
    <reaction>
        <text>O-phospho-L-seryl-[protein] + H2O = L-seryl-[protein] + phosphate</text>
        <dbReference type="Rhea" id="RHEA:20629"/>
        <dbReference type="Rhea" id="RHEA-COMP:9863"/>
        <dbReference type="Rhea" id="RHEA-COMP:11604"/>
        <dbReference type="ChEBI" id="CHEBI:15377"/>
        <dbReference type="ChEBI" id="CHEBI:29999"/>
        <dbReference type="ChEBI" id="CHEBI:43474"/>
        <dbReference type="ChEBI" id="CHEBI:83421"/>
        <dbReference type="EC" id="3.1.3.16"/>
    </reaction>
</comment>
<comment type="catalytic activity">
    <reaction>
        <text>O-phospho-L-threonyl-[protein] + H2O = L-threonyl-[protein] + phosphate</text>
        <dbReference type="Rhea" id="RHEA:47004"/>
        <dbReference type="Rhea" id="RHEA-COMP:11060"/>
        <dbReference type="Rhea" id="RHEA-COMP:11605"/>
        <dbReference type="ChEBI" id="CHEBI:15377"/>
        <dbReference type="ChEBI" id="CHEBI:30013"/>
        <dbReference type="ChEBI" id="CHEBI:43474"/>
        <dbReference type="ChEBI" id="CHEBI:61977"/>
        <dbReference type="EC" id="3.1.3.16"/>
    </reaction>
</comment>
<comment type="cofactor">
    <cofactor evidence="1">
        <name>Mg(2+)</name>
        <dbReference type="ChEBI" id="CHEBI:18420"/>
    </cofactor>
    <cofactor evidence="1">
        <name>Mn(2+)</name>
        <dbReference type="ChEBI" id="CHEBI:29035"/>
    </cofactor>
    <text evidence="1">Binds 2 magnesium or manganese ions per subunit.</text>
</comment>
<comment type="subunit">
    <text evidence="3">Interacts with phytochromes (via N-terminus).</text>
</comment>
<comment type="subcellular location">
    <subcellularLocation>
        <location evidence="4 5">Nucleus</location>
    </subcellularLocation>
    <text>Localizes in the nucleus upon illumination.</text>
</comment>
<comment type="alternative products">
    <event type="alternative splicing"/>
    <isoform>
        <id>Q9LME4-1</id>
        <name>1</name>
        <sequence type="displayed"/>
    </isoform>
    <isoform>
        <id>Q9LME4-2</id>
        <name>2</name>
        <sequence type="described" ref="VSP_036759 VSP_036760"/>
    </isoform>
</comment>
<comment type="disruption phenotype">
    <text evidence="3">Abnormal hypocotyl elongation under continuous red light.</text>
</comment>
<comment type="similarity">
    <text evidence="7">Belongs to the PP2C family.</text>
</comment>
<protein>
    <recommendedName>
        <fullName>Probable protein phosphatase 2C 9</fullName>
        <shortName>AtPP2C09</shortName>
        <ecNumber>3.1.3.16</ecNumber>
    </recommendedName>
    <alternativeName>
        <fullName>Phytochrome-associated protein phosphatase 2C</fullName>
        <shortName>PAPP2C</shortName>
    </alternativeName>
</protein>
<sequence length="281" mass="30722">MGKFCCFTSASEVVGGQSSSRSGKGRSDEGMIKYGFSLVKGKANHPMEDYHVANFINIQDHELGLFAIYDGHMGDSVPAYLQKRLFSNILKEGEFWVDPRRSIAKAYEKTDQAILSNSSDLGRGGSTAVTAILINGRKLWIANVGDSRAVLSHGGAITQMSTDHEPRTERSSIEDRGGFVSNLPGDVPRVNGQLAVSRAFGDKGLKTHLSSEPDIKEATVDSQTDVLLLASDGIWKVMTNEEAMEIARRVKDPQKAAKELTAEALRRESKDDISCVVVRFR</sequence>
<organism>
    <name type="scientific">Arabidopsis thaliana</name>
    <name type="common">Mouse-ear cress</name>
    <dbReference type="NCBI Taxonomy" id="3702"/>
    <lineage>
        <taxon>Eukaryota</taxon>
        <taxon>Viridiplantae</taxon>
        <taxon>Streptophyta</taxon>
        <taxon>Embryophyta</taxon>
        <taxon>Tracheophyta</taxon>
        <taxon>Spermatophyta</taxon>
        <taxon>Magnoliopsida</taxon>
        <taxon>eudicotyledons</taxon>
        <taxon>Gunneridae</taxon>
        <taxon>Pentapetalae</taxon>
        <taxon>rosids</taxon>
        <taxon>malvids</taxon>
        <taxon>Brassicales</taxon>
        <taxon>Brassicaceae</taxon>
        <taxon>Camelineae</taxon>
        <taxon>Arabidopsis</taxon>
    </lineage>
</organism>